<dbReference type="EMBL" id="CP000468">
    <property type="protein sequence ID" value="ABJ03438.1"/>
    <property type="status" value="ALT_INIT"/>
    <property type="molecule type" value="Genomic_DNA"/>
</dbReference>
<dbReference type="RefSeq" id="WP_000591379.1">
    <property type="nucleotide sequence ID" value="NZ_CADILS010000014.1"/>
</dbReference>
<dbReference type="SMR" id="A1AIE8"/>
<dbReference type="KEGG" id="ecv:APECO1_2497"/>
<dbReference type="HOGENOM" id="CLU_008287_18_5_6"/>
<dbReference type="Proteomes" id="UP000008216">
    <property type="component" value="Chromosome"/>
</dbReference>
<dbReference type="GO" id="GO:0009279">
    <property type="term" value="C:cell outer membrane"/>
    <property type="evidence" value="ECO:0007669"/>
    <property type="project" value="UniProtKB-SubCell"/>
</dbReference>
<dbReference type="GO" id="GO:0046930">
    <property type="term" value="C:pore complex"/>
    <property type="evidence" value="ECO:0007669"/>
    <property type="project" value="UniProtKB-KW"/>
</dbReference>
<dbReference type="GO" id="GO:0015420">
    <property type="term" value="F:ABC-type vitamin B12 transporter activity"/>
    <property type="evidence" value="ECO:0007669"/>
    <property type="project" value="InterPro"/>
</dbReference>
<dbReference type="GO" id="GO:0046872">
    <property type="term" value="F:metal ion binding"/>
    <property type="evidence" value="ECO:0007669"/>
    <property type="project" value="UniProtKB-KW"/>
</dbReference>
<dbReference type="GO" id="GO:0015288">
    <property type="term" value="F:porin activity"/>
    <property type="evidence" value="ECO:0007669"/>
    <property type="project" value="UniProtKB-KW"/>
</dbReference>
<dbReference type="GO" id="GO:0006811">
    <property type="term" value="P:monoatomic ion transport"/>
    <property type="evidence" value="ECO:0007669"/>
    <property type="project" value="UniProtKB-KW"/>
</dbReference>
<dbReference type="CDD" id="cd01347">
    <property type="entry name" value="ligand_gated_channel"/>
    <property type="match status" value="1"/>
</dbReference>
<dbReference type="FunFam" id="2.170.130.10:FF:000002">
    <property type="entry name" value="Vitamin B12 transporter BtuB"/>
    <property type="match status" value="1"/>
</dbReference>
<dbReference type="FunFam" id="2.40.170.20:FF:000001">
    <property type="entry name" value="Vitamin B12 transporter BtuB"/>
    <property type="match status" value="1"/>
</dbReference>
<dbReference type="Gene3D" id="2.40.170.20">
    <property type="entry name" value="TonB-dependent receptor, beta-barrel domain"/>
    <property type="match status" value="1"/>
</dbReference>
<dbReference type="Gene3D" id="2.170.130.10">
    <property type="entry name" value="TonB-dependent receptor, plug domain"/>
    <property type="match status" value="1"/>
</dbReference>
<dbReference type="HAMAP" id="MF_01531">
    <property type="entry name" value="BtuB"/>
    <property type="match status" value="1"/>
</dbReference>
<dbReference type="InterPro" id="IPR010101">
    <property type="entry name" value="B12_transptr_BtuB"/>
</dbReference>
<dbReference type="InterPro" id="IPR012910">
    <property type="entry name" value="Plug_dom"/>
</dbReference>
<dbReference type="InterPro" id="IPR037066">
    <property type="entry name" value="Plug_dom_sf"/>
</dbReference>
<dbReference type="InterPro" id="IPR039426">
    <property type="entry name" value="TonB-dep_rcpt-like"/>
</dbReference>
<dbReference type="InterPro" id="IPR000531">
    <property type="entry name" value="TonB-dep_rcpt_b-brl"/>
</dbReference>
<dbReference type="InterPro" id="IPR010916">
    <property type="entry name" value="TonB_box_CS"/>
</dbReference>
<dbReference type="InterPro" id="IPR036942">
    <property type="entry name" value="TonB_rcpt_b-brl_sf"/>
</dbReference>
<dbReference type="InterPro" id="IPR010917">
    <property type="entry name" value="TonB_rcpt_CS"/>
</dbReference>
<dbReference type="NCBIfam" id="NF007926">
    <property type="entry name" value="PRK10641.1"/>
    <property type="match status" value="1"/>
</dbReference>
<dbReference type="NCBIfam" id="TIGR01779">
    <property type="entry name" value="TonB-B12"/>
    <property type="match status" value="1"/>
</dbReference>
<dbReference type="PANTHER" id="PTHR30069:SF53">
    <property type="entry name" value="COLICIN I RECEPTOR-RELATED"/>
    <property type="match status" value="1"/>
</dbReference>
<dbReference type="PANTHER" id="PTHR30069">
    <property type="entry name" value="TONB-DEPENDENT OUTER MEMBRANE RECEPTOR"/>
    <property type="match status" value="1"/>
</dbReference>
<dbReference type="Pfam" id="PF07715">
    <property type="entry name" value="Plug"/>
    <property type="match status" value="1"/>
</dbReference>
<dbReference type="Pfam" id="PF00593">
    <property type="entry name" value="TonB_dep_Rec_b-barrel"/>
    <property type="match status" value="1"/>
</dbReference>
<dbReference type="SUPFAM" id="SSF56935">
    <property type="entry name" value="Porins"/>
    <property type="match status" value="1"/>
</dbReference>
<dbReference type="PROSITE" id="PS00430">
    <property type="entry name" value="TONB_DEPENDENT_REC_1"/>
    <property type="match status" value="1"/>
</dbReference>
<dbReference type="PROSITE" id="PS01156">
    <property type="entry name" value="TONB_DEPENDENT_REC_2"/>
    <property type="match status" value="1"/>
</dbReference>
<dbReference type="PROSITE" id="PS52016">
    <property type="entry name" value="TONB_DEPENDENT_REC_3"/>
    <property type="match status" value="1"/>
</dbReference>
<sequence>MIKKASLLTACSVTAFSAWAQDTSPDTLVVTANRFEQPRSTVLAPTTVVTRQDIDRWQSTSVNDVLRRLPGVDITQNGGSGQLSSIFIRGTNASHVLVLIDGVRLNLAGVSGSADLSQFPIALVQRVEYIRGPRSAVYGSDAIGGVVNIITTRDHPGTEISAGWGSNSYQNYDVSTQQQLGDKTRVTLLGDYAHTHGYDVVAYGNTGTQAQPDNDGFLSKTLYGALEHNFTDVWSGFVRGYGYDNRTNYDAYYSPGLPLVDTRKLYSQSWDAGLRYNGELIKSQLITSYSHSKDYNYDPHYGRYDSSATLDEMKQYTVQWANNIIIGHGNIGAGVDWQKQSTAPGTAYVEDGYDQRNTGIYLTGLQQVGDFTFEGAGRSDDNSQFGRHGTWQTSAGWEFIEGYRFIASYGTSYKAPNLGQLYGTYGNPNLNPEKSKQWEGAFEGLTAGVNWRISGYRNDVSDLIDYDDHTLKYYNEGKARIKGVEATANFDTGPLTHTVSYDYVDARNAITDTPLLRRAKQQVKYQLDWQLYDFDWGITYQYLGTRYDKDYSSYPYQTVKMGGVSLWDLAVAYPVTSHLTVRGKIANLFDKDYETVYGYQTAGREYTLSGSYTF</sequence>
<keyword id="KW-0106">Calcium</keyword>
<keyword id="KW-0998">Cell outer membrane</keyword>
<keyword id="KW-0406">Ion transport</keyword>
<keyword id="KW-0472">Membrane</keyword>
<keyword id="KW-0479">Metal-binding</keyword>
<keyword id="KW-0626">Porin</keyword>
<keyword id="KW-1185">Reference proteome</keyword>
<keyword id="KW-0732">Signal</keyword>
<keyword id="KW-0798">TonB box</keyword>
<keyword id="KW-0812">Transmembrane</keyword>
<keyword id="KW-1134">Transmembrane beta strand</keyword>
<keyword id="KW-0813">Transport</keyword>
<evidence type="ECO:0000255" key="1">
    <source>
        <dbReference type="HAMAP-Rule" id="MF_01531"/>
    </source>
</evidence>
<evidence type="ECO:0000255" key="2">
    <source>
        <dbReference type="PROSITE-ProRule" id="PRU01360"/>
    </source>
</evidence>
<evidence type="ECO:0000305" key="3"/>
<accession>A1AIE8</accession>
<organism>
    <name type="scientific">Escherichia coli O1:K1 / APEC</name>
    <dbReference type="NCBI Taxonomy" id="405955"/>
    <lineage>
        <taxon>Bacteria</taxon>
        <taxon>Pseudomonadati</taxon>
        <taxon>Pseudomonadota</taxon>
        <taxon>Gammaproteobacteria</taxon>
        <taxon>Enterobacterales</taxon>
        <taxon>Enterobacteriaceae</taxon>
        <taxon>Escherichia</taxon>
    </lineage>
</organism>
<gene>
    <name evidence="1" type="primary">btuB</name>
    <name type="ordered locus">Ecok1_39440</name>
    <name type="ORF">APECO1_2497</name>
</gene>
<proteinExistence type="inferred from homology"/>
<reference key="1">
    <citation type="journal article" date="2007" name="J. Bacteriol.">
        <title>The genome sequence of avian pathogenic Escherichia coli strain O1:K1:H7 shares strong similarities with human extraintestinal pathogenic E. coli genomes.</title>
        <authorList>
            <person name="Johnson T.J."/>
            <person name="Kariyawasam S."/>
            <person name="Wannemuehler Y."/>
            <person name="Mangiamele P."/>
            <person name="Johnson S.J."/>
            <person name="Doetkott C."/>
            <person name="Skyberg J.A."/>
            <person name="Lynne A.M."/>
            <person name="Johnson J.R."/>
            <person name="Nolan L.K."/>
        </authorList>
    </citation>
    <scope>NUCLEOTIDE SEQUENCE [LARGE SCALE GENOMIC DNA]</scope>
</reference>
<feature type="signal peptide" evidence="1">
    <location>
        <begin position="1"/>
        <end position="20"/>
    </location>
</feature>
<feature type="chain" id="PRO_0000292758" description="Vitamin B12 transporter BtuB">
    <location>
        <begin position="21"/>
        <end position="614"/>
    </location>
</feature>
<feature type="transmembrane region" description="Beta stranded" evidence="1">
    <location>
        <begin position="158"/>
        <end position="165"/>
    </location>
</feature>
<feature type="transmembrane region" description="Beta stranded" evidence="1">
    <location>
        <begin position="169"/>
        <end position="178"/>
    </location>
</feature>
<feature type="transmembrane region" description="Beta stranded" evidence="1">
    <location>
        <begin position="184"/>
        <end position="195"/>
    </location>
</feature>
<feature type="transmembrane region" description="Beta stranded" evidence="1">
    <location>
        <begin position="217"/>
        <end position="227"/>
    </location>
</feature>
<feature type="transmembrane region" description="Beta stranded" evidence="1">
    <location>
        <begin position="232"/>
        <end position="248"/>
    </location>
</feature>
<feature type="transmembrane region" description="Beta stranded" evidence="1">
    <location>
        <begin position="263"/>
        <end position="277"/>
    </location>
</feature>
<feature type="transmembrane region" description="Beta stranded" evidence="1">
    <location>
        <begin position="279"/>
        <end position="296"/>
    </location>
</feature>
<feature type="transmembrane region" description="Beta stranded" evidence="1">
    <location>
        <begin position="309"/>
        <end position="325"/>
    </location>
</feature>
<feature type="transmembrane region" description="Beta stranded" evidence="1">
    <location>
        <begin position="328"/>
        <end position="337"/>
    </location>
</feature>
<feature type="transmembrane region" description="Beta stranded" evidence="1">
    <location>
        <begin position="353"/>
        <end position="369"/>
    </location>
</feature>
<feature type="transmembrane region" description="Beta stranded" evidence="1">
    <location>
        <begin position="371"/>
        <end position="381"/>
    </location>
</feature>
<feature type="transmembrane region" description="Beta stranded" evidence="1">
    <location>
        <begin position="385"/>
        <end position="400"/>
    </location>
</feature>
<feature type="transmembrane region" description="Beta stranded" evidence="1">
    <location>
        <begin position="403"/>
        <end position="417"/>
    </location>
</feature>
<feature type="transmembrane region" description="Beta stranded" evidence="1">
    <location>
        <begin position="434"/>
        <end position="443"/>
    </location>
</feature>
<feature type="transmembrane region" description="Beta stranded" evidence="1">
    <location>
        <begin position="449"/>
        <end position="458"/>
    </location>
</feature>
<feature type="transmembrane region" description="Beta stranded" evidence="1">
    <location>
        <begin position="473"/>
        <end position="490"/>
    </location>
</feature>
<feature type="transmembrane region" description="Beta stranded" evidence="1">
    <location>
        <begin position="494"/>
        <end position="509"/>
    </location>
</feature>
<feature type="transmembrane region" description="Beta stranded" evidence="1">
    <location>
        <begin position="517"/>
        <end position="529"/>
    </location>
</feature>
<feature type="transmembrane region" description="Beta stranded" evidence="1">
    <location>
        <begin position="535"/>
        <end position="550"/>
    </location>
</feature>
<feature type="transmembrane region" description="Beta stranded" evidence="1">
    <location>
        <begin position="558"/>
        <end position="572"/>
    </location>
</feature>
<feature type="transmembrane region" description="Beta stranded" evidence="1">
    <location>
        <begin position="585"/>
        <end position="596"/>
    </location>
</feature>
<feature type="transmembrane region" description="Beta stranded" evidence="1">
    <location>
        <begin position="602"/>
        <end position="614"/>
    </location>
</feature>
<feature type="domain" description="TBDR plug" evidence="2">
    <location>
        <begin position="38"/>
        <end position="152"/>
    </location>
</feature>
<feature type="domain" description="TBDR beta-barrel" evidence="2">
    <location>
        <begin position="155"/>
        <end position="614"/>
    </location>
</feature>
<feature type="short sequence motif" description="TonB box">
    <location>
        <begin position="26"/>
        <end position="33"/>
    </location>
</feature>
<feature type="short sequence motif" description="TonB C-terminal box">
    <location>
        <begin position="597"/>
        <end position="614"/>
    </location>
</feature>
<feature type="binding site" evidence="1">
    <location>
        <position position="83"/>
    </location>
    <ligand>
        <name>cyanocob(III)alamin</name>
        <dbReference type="ChEBI" id="CHEBI:17439"/>
    </ligand>
</feature>
<feature type="binding site" evidence="1">
    <location>
        <position position="85"/>
    </location>
    <ligand>
        <name>cyanocob(III)alamin</name>
        <dbReference type="ChEBI" id="CHEBI:17439"/>
    </ligand>
</feature>
<feature type="binding site" evidence="1">
    <location>
        <position position="92"/>
    </location>
    <ligand>
        <name>cyanocob(III)alamin</name>
        <dbReference type="ChEBI" id="CHEBI:17439"/>
    </ligand>
</feature>
<feature type="binding site" evidence="1">
    <location>
        <begin position="110"/>
        <end position="111"/>
    </location>
    <ligand>
        <name>cyanocob(III)alamin</name>
        <dbReference type="ChEBI" id="CHEBI:17439"/>
    </ligand>
</feature>
<feature type="binding site" evidence="1">
    <location>
        <position position="199"/>
    </location>
    <ligand>
        <name>Ca(2+)</name>
        <dbReference type="ChEBI" id="CHEBI:29108"/>
        <label>1</label>
    </ligand>
</feature>
<feature type="binding site" evidence="1">
    <location>
        <position position="211"/>
    </location>
    <ligand>
        <name>Ca(2+)</name>
        <dbReference type="ChEBI" id="CHEBI:29108"/>
        <label>1</label>
    </ligand>
</feature>
<feature type="binding site" evidence="1">
    <location>
        <position position="213"/>
    </location>
    <ligand>
        <name>Ca(2+)</name>
        <dbReference type="ChEBI" id="CHEBI:29108"/>
        <label>1</label>
    </ligand>
</feature>
<feature type="binding site" evidence="1">
    <location>
        <position position="213"/>
    </location>
    <ligand>
        <name>Ca(2+)</name>
        <dbReference type="ChEBI" id="CHEBI:29108"/>
        <label>2</label>
    </ligand>
</feature>
<feature type="binding site" evidence="1">
    <location>
        <position position="215"/>
    </location>
    <ligand>
        <name>Ca(2+)</name>
        <dbReference type="ChEBI" id="CHEBI:29108"/>
        <label>1</label>
    </ligand>
</feature>
<feature type="binding site" evidence="1">
    <location>
        <position position="215"/>
    </location>
    <ligand>
        <name>Ca(2+)</name>
        <dbReference type="ChEBI" id="CHEBI:29108"/>
        <label>2</label>
    </ligand>
</feature>
<feature type="binding site" evidence="1">
    <location>
        <position position="249"/>
    </location>
    <ligand>
        <name>Ca(2+)</name>
        <dbReference type="ChEBI" id="CHEBI:29108"/>
        <label>2</label>
    </ligand>
</feature>
<feature type="binding site" evidence="1">
    <location>
        <position position="250"/>
    </location>
    <ligand>
        <name>Ca(2+)</name>
        <dbReference type="ChEBI" id="CHEBI:29108"/>
        <label>1</label>
    </ligand>
</feature>
<feature type="binding site" evidence="1">
    <location>
        <position position="250"/>
    </location>
    <ligand>
        <name>Ca(2+)</name>
        <dbReference type="ChEBI" id="CHEBI:29108"/>
        <label>2</label>
    </ligand>
</feature>
<feature type="binding site" evidence="1">
    <location>
        <position position="251"/>
    </location>
    <ligand>
        <name>cyanocob(III)alamin</name>
        <dbReference type="ChEBI" id="CHEBI:17439"/>
    </ligand>
</feature>
<feature type="binding site" evidence="1">
    <location>
        <position position="261"/>
    </location>
    <ligand>
        <name>Ca(2+)</name>
        <dbReference type="ChEBI" id="CHEBI:29108"/>
        <label>2</label>
    </ligand>
</feature>
<feature type="binding site" evidence="1">
    <location>
        <position position="309"/>
    </location>
    <ligand>
        <name>cyanocob(III)alamin</name>
        <dbReference type="ChEBI" id="CHEBI:17439"/>
    </ligand>
</feature>
<feature type="binding site" evidence="1">
    <location>
        <position position="517"/>
    </location>
    <ligand>
        <name>cyanocob(III)alamin</name>
        <dbReference type="ChEBI" id="CHEBI:17439"/>
    </ligand>
</feature>
<feature type="binding site" evidence="1">
    <location>
        <position position="551"/>
    </location>
    <ligand>
        <name>cyanocob(III)alamin</name>
        <dbReference type="ChEBI" id="CHEBI:17439"/>
    </ligand>
</feature>
<comment type="function">
    <text evidence="1">Involved in the active translocation of vitamin B12 (cyanocobalamin) across the outer membrane to the periplasmic space. It derives its energy for transport by interacting with the trans-periplasmic membrane protein TonB.</text>
</comment>
<comment type="subcellular location">
    <subcellularLocation>
        <location evidence="1">Cell outer membrane</location>
        <topology evidence="1">Multi-pass membrane protein</topology>
    </subcellularLocation>
</comment>
<comment type="similarity">
    <text evidence="1">Belongs to the TonB-dependent receptor family. BtuB (TC 1.B.14.3.1) subfamily.</text>
</comment>
<comment type="sequence caution" evidence="3">
    <conflict type="erroneous initiation">
        <sequence resource="EMBL-CDS" id="ABJ03438"/>
    </conflict>
</comment>
<protein>
    <recommendedName>
        <fullName evidence="1">Vitamin B12 transporter BtuB</fullName>
    </recommendedName>
    <alternativeName>
        <fullName evidence="1">Cobalamin receptor</fullName>
    </alternativeName>
    <alternativeName>
        <fullName evidence="1">Outer membrane cobalamin translocator</fullName>
    </alternativeName>
</protein>
<name>BTUB_ECOK1</name>